<sequence>MINPISFRPGPVTFWTTLIYLALLIPIVIINEKTPAAPKTAEPFKGVNLTEAWLDLTTITRAYHPYNSKFNEEVRRYLLEKVETILEENGASWVSDGQMTTVKDGKSAAVTVFDDNVSNSTFVMGKSNGTTFTRTDSINNAAYFEGTNILVYIRGKEDDEGEWWEADYAHGMRRNAKGLTLVNAHYDSVSTGFGATDDGMGVVTALQVLKYFTAPGHQPQRGIVVMLNNGEEDWLYGAHALGQHKLNPFIHTFLNLEGAGAGGRAIVFRATDREVMAAYARTSHPFGTVIASDAFGLGFISSGTDYSVLVDAYGQRGIDLAFFKPRARYHTNQDDTRHTSKGSLWHMLSAAIHTTKQFSGDTGNTFIGQRPDKAHGKVANGRSSNGVWFDLFGKSFVLFGLRGMFAWSLTLLIATPLVLVGITWLLRNLDKDYFFTSTVKTKEHPEYEAVPIGGWKGFFRFPFALGVAVFFTISSALLMNKVNPLIVYSSRYSVWVMMVSIFYFSFWMIMRGANFVRPSALHRGYANLWLFVFGWIVLVAVTALEDRRRIAAGYIFVFLESAIFLSCLISFVELLAVPRKSSYALQVQEDYDGQEHDHNGYQGFRDSTDEPSLRARAESSASAASPPSPTVAQEPSKSKAPAGTTNGLSTAPSVAAHSSQPQPAPTTPIPGRSSGAPSTASRDENESEDDDEPTERTPLVGGNGTNDRGRTTFATTYRRSITALVHGARKMEEDGEPYDHEQEWSGHLPSWAWFFQFLLLGPFMIILAAQTGLMLTDAVYQTGSDGSKLITPYLIIFVFTVLLILPLTPFIHRVTHHIPVFLLVVFIVTLTYNLIAFPFSANNRYKTFFGQYIDVATGDNKVCYTGIEEYVRPIIAELPSASGREVTCGKSLRRGSTISTCCFDGSAVPPKLGSEDDNGLPEDSYADLITINATRSTKRGDSSRTTARIEITADNTKSCFLQFKKPVSALAIENGSGWDDRFGQYPEDGVGLVRLWHREFGKTWVVNAEWKGSETRKEYDENDGTVICMWSDANTPGTIPALDEALQFVPSWAAVTKFSEGLVEGRKAFKIV</sequence>
<evidence type="ECO:0000250" key="1">
    <source>
        <dbReference type="UniProtKB" id="P38244"/>
    </source>
</evidence>
<evidence type="ECO:0000250" key="2">
    <source>
        <dbReference type="UniProtKB" id="P80561"/>
    </source>
</evidence>
<evidence type="ECO:0000255" key="3"/>
<evidence type="ECO:0000255" key="4">
    <source>
        <dbReference type="PROSITE-ProRule" id="PRU00498"/>
    </source>
</evidence>
<evidence type="ECO:0000256" key="5">
    <source>
        <dbReference type="SAM" id="MobiDB-lite"/>
    </source>
</evidence>
<evidence type="ECO:0000305" key="6"/>
<keyword id="KW-0325">Glycoprotein</keyword>
<keyword id="KW-0378">Hydrolase</keyword>
<keyword id="KW-0472">Membrane</keyword>
<keyword id="KW-0479">Metal-binding</keyword>
<keyword id="KW-0482">Metalloprotease</keyword>
<keyword id="KW-0645">Protease</keyword>
<keyword id="KW-1185">Reference proteome</keyword>
<keyword id="KW-0812">Transmembrane</keyword>
<keyword id="KW-1133">Transmembrane helix</keyword>
<keyword id="KW-0926">Vacuole</keyword>
<keyword id="KW-0862">Zinc</keyword>
<feature type="chain" id="PRO_0000411727" description="Vacuolar membrane protease">
    <location>
        <begin position="1"/>
        <end position="1072"/>
    </location>
</feature>
<feature type="topological domain" description="Cytoplasmic" evidence="1">
    <location>
        <begin position="1"/>
        <end position="9"/>
    </location>
</feature>
<feature type="transmembrane region" description="Helical; Name=1" evidence="3">
    <location>
        <begin position="10"/>
        <end position="30"/>
    </location>
</feature>
<feature type="topological domain" description="Vacuolar" evidence="1">
    <location>
        <begin position="31"/>
        <end position="404"/>
    </location>
</feature>
<feature type="transmembrane region" description="Helical; Name=2" evidence="3">
    <location>
        <begin position="405"/>
        <end position="425"/>
    </location>
</feature>
<feature type="topological domain" description="Cytoplasmic" evidence="1">
    <location>
        <begin position="426"/>
        <end position="457"/>
    </location>
</feature>
<feature type="transmembrane region" description="Helical; Name=3" evidence="3">
    <location>
        <begin position="458"/>
        <end position="478"/>
    </location>
</feature>
<feature type="topological domain" description="Vacuolar" evidence="1">
    <location>
        <begin position="479"/>
        <end position="492"/>
    </location>
</feature>
<feature type="transmembrane region" description="Helical; Name=4" evidence="3">
    <location>
        <begin position="493"/>
        <end position="513"/>
    </location>
</feature>
<feature type="topological domain" description="Cytoplasmic" evidence="1">
    <location>
        <begin position="514"/>
        <end position="523"/>
    </location>
</feature>
<feature type="transmembrane region" description="Helical; Name=5" evidence="3">
    <location>
        <begin position="524"/>
        <end position="544"/>
    </location>
</feature>
<feature type="topological domain" description="Vacuolar" evidence="1">
    <location>
        <begin position="545"/>
        <end position="554"/>
    </location>
</feature>
<feature type="transmembrane region" description="Helical; Name=6" evidence="3">
    <location>
        <begin position="555"/>
        <end position="575"/>
    </location>
</feature>
<feature type="topological domain" description="Cytoplasmic" evidence="1">
    <location>
        <begin position="576"/>
        <end position="747"/>
    </location>
</feature>
<feature type="transmembrane region" description="Helical; Name=7" evidence="3">
    <location>
        <begin position="748"/>
        <end position="768"/>
    </location>
</feature>
<feature type="topological domain" description="Vacuolar" evidence="1">
    <location>
        <begin position="769"/>
        <end position="789"/>
    </location>
</feature>
<feature type="transmembrane region" description="Helical; Name=8" evidence="3">
    <location>
        <begin position="790"/>
        <end position="810"/>
    </location>
</feature>
<feature type="topological domain" description="Cytoplasmic" evidence="1">
    <location>
        <begin position="811"/>
        <end position="817"/>
    </location>
</feature>
<feature type="transmembrane region" description="Helical; Name=9" evidence="3">
    <location>
        <begin position="818"/>
        <end position="838"/>
    </location>
</feature>
<feature type="topological domain" description="Vacuolar" evidence="1">
    <location>
        <begin position="839"/>
        <end position="1072"/>
    </location>
</feature>
<feature type="region of interest" description="Disordered" evidence="5">
    <location>
        <begin position="593"/>
        <end position="713"/>
    </location>
</feature>
<feature type="compositionally biased region" description="Basic and acidic residues" evidence="5">
    <location>
        <begin position="606"/>
        <end position="617"/>
    </location>
</feature>
<feature type="compositionally biased region" description="Polar residues" evidence="5">
    <location>
        <begin position="643"/>
        <end position="661"/>
    </location>
</feature>
<feature type="active site" description="Proton acceptor" evidence="2">
    <location>
        <position position="231"/>
    </location>
</feature>
<feature type="binding site" evidence="2">
    <location>
        <position position="185"/>
    </location>
    <ligand>
        <name>Zn(2+)</name>
        <dbReference type="ChEBI" id="CHEBI:29105"/>
        <label>1</label>
        <note>catalytic</note>
    </ligand>
</feature>
<feature type="binding site" evidence="2">
    <location>
        <position position="197"/>
    </location>
    <ligand>
        <name>Zn(2+)</name>
        <dbReference type="ChEBI" id="CHEBI:29105"/>
        <label>1</label>
        <note>catalytic</note>
    </ligand>
</feature>
<feature type="binding site" evidence="2">
    <location>
        <position position="197"/>
    </location>
    <ligand>
        <name>Zn(2+)</name>
        <dbReference type="ChEBI" id="CHEBI:29105"/>
        <label>2</label>
        <note>catalytic</note>
    </ligand>
</feature>
<feature type="binding site" evidence="2">
    <location>
        <position position="232"/>
    </location>
    <ligand>
        <name>Zn(2+)</name>
        <dbReference type="ChEBI" id="CHEBI:29105"/>
        <label>2</label>
        <note>catalytic</note>
    </ligand>
</feature>
<feature type="binding site" evidence="2">
    <location>
        <position position="257"/>
    </location>
    <ligand>
        <name>Zn(2+)</name>
        <dbReference type="ChEBI" id="CHEBI:29105"/>
        <label>1</label>
        <note>catalytic</note>
    </ligand>
</feature>
<feature type="binding site" evidence="2">
    <location>
        <position position="330"/>
    </location>
    <ligand>
        <name>Zn(2+)</name>
        <dbReference type="ChEBI" id="CHEBI:29105"/>
        <label>2</label>
        <note>catalytic</note>
    </ligand>
</feature>
<feature type="site" description="Transition state stabilizer" evidence="2">
    <location>
        <position position="329"/>
    </location>
</feature>
<feature type="glycosylation site" description="N-linked (GlcNAc...) asparagine" evidence="4">
    <location>
        <position position="48"/>
    </location>
</feature>
<feature type="glycosylation site" description="N-linked (GlcNAc...) asparagine" evidence="4">
    <location>
        <position position="116"/>
    </location>
</feature>
<feature type="glycosylation site" description="N-linked (GlcNAc...) asparagine" evidence="4">
    <location>
        <position position="119"/>
    </location>
</feature>
<feature type="glycosylation site" description="N-linked (GlcNAc...) asparagine" evidence="4">
    <location>
        <position position="128"/>
    </location>
</feature>
<feature type="glycosylation site" description="N-linked (GlcNAc...) asparagine" evidence="4">
    <location>
        <position position="932"/>
    </location>
</feature>
<feature type="glycosylation site" description="N-linked (GlcNAc...) asparagine" evidence="4">
    <location>
        <position position="974"/>
    </location>
</feature>
<reference key="1">
    <citation type="journal article" date="2003" name="Nucleic Acids Res.">
        <title>What's in the genome of a filamentous fungus? Analysis of the Neurospora genome sequence.</title>
        <authorList>
            <person name="Mannhaupt G."/>
            <person name="Montrone C."/>
            <person name="Haase D."/>
            <person name="Mewes H.-W."/>
            <person name="Aign V."/>
            <person name="Hoheisel J.D."/>
            <person name="Fartmann B."/>
            <person name="Nyakatura G."/>
            <person name="Kempken F."/>
            <person name="Maier J."/>
            <person name="Schulte U."/>
        </authorList>
    </citation>
    <scope>NUCLEOTIDE SEQUENCE [LARGE SCALE GENOMIC DNA]</scope>
    <source>
        <strain>ATCC 24698 / 74-OR23-1A / CBS 708.71 / DSM 1257 / FGSC 987</strain>
    </source>
</reference>
<reference key="2">
    <citation type="journal article" date="2003" name="Nature">
        <title>The genome sequence of the filamentous fungus Neurospora crassa.</title>
        <authorList>
            <person name="Galagan J.E."/>
            <person name="Calvo S.E."/>
            <person name="Borkovich K.A."/>
            <person name="Selker E.U."/>
            <person name="Read N.D."/>
            <person name="Jaffe D.B."/>
            <person name="FitzHugh W."/>
            <person name="Ma L.-J."/>
            <person name="Smirnov S."/>
            <person name="Purcell S."/>
            <person name="Rehman B."/>
            <person name="Elkins T."/>
            <person name="Engels R."/>
            <person name="Wang S."/>
            <person name="Nielsen C.B."/>
            <person name="Butler J."/>
            <person name="Endrizzi M."/>
            <person name="Qui D."/>
            <person name="Ianakiev P."/>
            <person name="Bell-Pedersen D."/>
            <person name="Nelson M.A."/>
            <person name="Werner-Washburne M."/>
            <person name="Selitrennikoff C.P."/>
            <person name="Kinsey J.A."/>
            <person name="Braun E.L."/>
            <person name="Zelter A."/>
            <person name="Schulte U."/>
            <person name="Kothe G.O."/>
            <person name="Jedd G."/>
            <person name="Mewes H.-W."/>
            <person name="Staben C."/>
            <person name="Marcotte E."/>
            <person name="Greenberg D."/>
            <person name="Roy A."/>
            <person name="Foley K."/>
            <person name="Naylor J."/>
            <person name="Stange-Thomann N."/>
            <person name="Barrett R."/>
            <person name="Gnerre S."/>
            <person name="Kamal M."/>
            <person name="Kamvysselis M."/>
            <person name="Mauceli E.W."/>
            <person name="Bielke C."/>
            <person name="Rudd S."/>
            <person name="Frishman D."/>
            <person name="Krystofova S."/>
            <person name="Rasmussen C."/>
            <person name="Metzenberg R.L."/>
            <person name="Perkins D.D."/>
            <person name="Kroken S."/>
            <person name="Cogoni C."/>
            <person name="Macino G."/>
            <person name="Catcheside D.E.A."/>
            <person name="Li W."/>
            <person name="Pratt R.J."/>
            <person name="Osmani S.A."/>
            <person name="DeSouza C.P.C."/>
            <person name="Glass N.L."/>
            <person name="Orbach M.J."/>
            <person name="Berglund J.A."/>
            <person name="Voelker R."/>
            <person name="Yarden O."/>
            <person name="Plamann M."/>
            <person name="Seiler S."/>
            <person name="Dunlap J.C."/>
            <person name="Radford A."/>
            <person name="Aramayo R."/>
            <person name="Natvig D.O."/>
            <person name="Alex L.A."/>
            <person name="Mannhaupt G."/>
            <person name="Ebbole D.J."/>
            <person name="Freitag M."/>
            <person name="Paulsen I."/>
            <person name="Sachs M.S."/>
            <person name="Lander E.S."/>
            <person name="Nusbaum C."/>
            <person name="Birren B.W."/>
        </authorList>
    </citation>
    <scope>NUCLEOTIDE SEQUENCE [LARGE SCALE GENOMIC DNA]</scope>
    <source>
        <strain>ATCC 24698 / 74-OR23-1A / CBS 708.71 / DSM 1257 / FGSC 987</strain>
    </source>
</reference>
<comment type="function">
    <text evidence="1">May be involved in vacuolar sorting and osmoregulation.</text>
</comment>
<comment type="cofactor">
    <cofactor evidence="2">
        <name>Zn(2+)</name>
        <dbReference type="ChEBI" id="CHEBI:29105"/>
    </cofactor>
    <text evidence="2">Binds 2 Zn(2+) ions per subunit.</text>
</comment>
<comment type="subcellular location">
    <subcellularLocation>
        <location evidence="1">Vacuole membrane</location>
        <topology evidence="3">Multi-pass membrane protein</topology>
    </subcellularLocation>
</comment>
<comment type="similarity">
    <text evidence="6">Belongs to the peptidase M28 family.</text>
</comment>
<proteinExistence type="inferred from homology"/>
<organism>
    <name type="scientific">Neurospora crassa (strain ATCC 24698 / 74-OR23-1A / CBS 708.71 / DSM 1257 / FGSC 987)</name>
    <dbReference type="NCBI Taxonomy" id="367110"/>
    <lineage>
        <taxon>Eukaryota</taxon>
        <taxon>Fungi</taxon>
        <taxon>Dikarya</taxon>
        <taxon>Ascomycota</taxon>
        <taxon>Pezizomycotina</taxon>
        <taxon>Sordariomycetes</taxon>
        <taxon>Sordariomycetidae</taxon>
        <taxon>Sordariales</taxon>
        <taxon>Sordariaceae</taxon>
        <taxon>Neurospora</taxon>
    </lineage>
</organism>
<name>PFF1_NEUCR</name>
<gene>
    <name type="ORF">9G6.250</name>
    <name type="ORF">NCU04133</name>
</gene>
<accession>Q1K7M0</accession>
<accession>Q9C2E0</accession>
<dbReference type="EC" id="3.4.-.-" evidence="6"/>
<dbReference type="EMBL" id="AL513463">
    <property type="protein sequence ID" value="CAC28773.2"/>
    <property type="molecule type" value="Genomic_DNA"/>
</dbReference>
<dbReference type="EMBL" id="CM002240">
    <property type="protein sequence ID" value="EAA32053.2"/>
    <property type="molecule type" value="Genomic_DNA"/>
</dbReference>
<dbReference type="RefSeq" id="XP_961289.2">
    <property type="nucleotide sequence ID" value="XM_956196.3"/>
</dbReference>
<dbReference type="SMR" id="Q1K7M0"/>
<dbReference type="FunCoup" id="Q1K7M0">
    <property type="interactions" value="2"/>
</dbReference>
<dbReference type="STRING" id="367110.Q1K7M0"/>
<dbReference type="PaxDb" id="5141-EFNCRP00000003961"/>
<dbReference type="EnsemblFungi" id="EAA32053">
    <property type="protein sequence ID" value="EAA32053"/>
    <property type="gene ID" value="NCU04133"/>
</dbReference>
<dbReference type="GeneID" id="3877453"/>
<dbReference type="KEGG" id="ncr:NCU04133"/>
<dbReference type="VEuPathDB" id="FungiDB:NCU04133"/>
<dbReference type="HOGENOM" id="CLU_006412_1_0_1"/>
<dbReference type="InParanoid" id="Q1K7M0"/>
<dbReference type="OMA" id="FCHTFVN"/>
<dbReference type="OrthoDB" id="76293at2759"/>
<dbReference type="Proteomes" id="UP000001805">
    <property type="component" value="Chromosome 2, Linkage Group V"/>
</dbReference>
<dbReference type="GO" id="GO:0005774">
    <property type="term" value="C:vacuolar membrane"/>
    <property type="evidence" value="ECO:0007669"/>
    <property type="project" value="UniProtKB-SubCell"/>
</dbReference>
<dbReference type="GO" id="GO:0046872">
    <property type="term" value="F:metal ion binding"/>
    <property type="evidence" value="ECO:0007669"/>
    <property type="project" value="UniProtKB-KW"/>
</dbReference>
<dbReference type="GO" id="GO:0008235">
    <property type="term" value="F:metalloexopeptidase activity"/>
    <property type="evidence" value="ECO:0007669"/>
    <property type="project" value="InterPro"/>
</dbReference>
<dbReference type="GO" id="GO:0006508">
    <property type="term" value="P:proteolysis"/>
    <property type="evidence" value="ECO:0000318"/>
    <property type="project" value="GO_Central"/>
</dbReference>
<dbReference type="CDD" id="cd03875">
    <property type="entry name" value="M28_Fxna_like"/>
    <property type="match status" value="1"/>
</dbReference>
<dbReference type="FunFam" id="3.40.630.10:FF:000057">
    <property type="entry name" value="Vacuolar membrane protease"/>
    <property type="match status" value="1"/>
</dbReference>
<dbReference type="Gene3D" id="3.40.630.10">
    <property type="entry name" value="Zn peptidases"/>
    <property type="match status" value="1"/>
</dbReference>
<dbReference type="InterPro" id="IPR048024">
    <property type="entry name" value="Fxna-like_M28_dom"/>
</dbReference>
<dbReference type="InterPro" id="IPR045175">
    <property type="entry name" value="M28_fam"/>
</dbReference>
<dbReference type="InterPro" id="IPR007484">
    <property type="entry name" value="Peptidase_M28"/>
</dbReference>
<dbReference type="InterPro" id="IPR053975">
    <property type="entry name" value="PFF1_C"/>
</dbReference>
<dbReference type="InterPro" id="IPR053976">
    <property type="entry name" value="PFF1_TM"/>
</dbReference>
<dbReference type="PANTHER" id="PTHR12147">
    <property type="entry name" value="METALLOPEPTIDASE M28 FAMILY MEMBER"/>
    <property type="match status" value="1"/>
</dbReference>
<dbReference type="PANTHER" id="PTHR12147:SF58">
    <property type="entry name" value="VACUOLAR MEMBRANE PROTEASE"/>
    <property type="match status" value="1"/>
</dbReference>
<dbReference type="Pfam" id="PF04389">
    <property type="entry name" value="Peptidase_M28"/>
    <property type="match status" value="1"/>
</dbReference>
<dbReference type="Pfam" id="PF22250">
    <property type="entry name" value="PFF1_C"/>
    <property type="match status" value="1"/>
</dbReference>
<dbReference type="Pfam" id="PF22251">
    <property type="entry name" value="PFF1_TM"/>
    <property type="match status" value="2"/>
</dbReference>
<dbReference type="SUPFAM" id="SSF53187">
    <property type="entry name" value="Zn-dependent exopeptidases"/>
    <property type="match status" value="1"/>
</dbReference>
<protein>
    <recommendedName>
        <fullName evidence="1">Vacuolar membrane protease</fullName>
        <ecNumber evidence="6">3.4.-.-</ecNumber>
    </recommendedName>
    <alternativeName>
        <fullName evidence="1">FXNA-related family protease 1</fullName>
    </alternativeName>
</protein>